<dbReference type="PIR" id="A00111">
    <property type="entry name" value="CCEG6"/>
</dbReference>
<dbReference type="BMRB" id="P00119"/>
<dbReference type="SMR" id="P00119"/>
<dbReference type="GO" id="GO:0009543">
    <property type="term" value="C:chloroplast thylakoid lumen"/>
    <property type="evidence" value="ECO:0007669"/>
    <property type="project" value="UniProtKB-SubCell"/>
</dbReference>
<dbReference type="GO" id="GO:0009055">
    <property type="term" value="F:electron transfer activity"/>
    <property type="evidence" value="ECO:0007669"/>
    <property type="project" value="InterPro"/>
</dbReference>
<dbReference type="GO" id="GO:0020037">
    <property type="term" value="F:heme binding"/>
    <property type="evidence" value="ECO:0007669"/>
    <property type="project" value="InterPro"/>
</dbReference>
<dbReference type="GO" id="GO:0005506">
    <property type="term" value="F:iron ion binding"/>
    <property type="evidence" value="ECO:0007669"/>
    <property type="project" value="InterPro"/>
</dbReference>
<dbReference type="GO" id="GO:0015979">
    <property type="term" value="P:photosynthesis"/>
    <property type="evidence" value="ECO:0007669"/>
    <property type="project" value="UniProtKB-KW"/>
</dbReference>
<dbReference type="Gene3D" id="1.10.760.10">
    <property type="entry name" value="Cytochrome c-like domain"/>
    <property type="match status" value="1"/>
</dbReference>
<dbReference type="InterPro" id="IPR009056">
    <property type="entry name" value="Cyt_c-like_dom"/>
</dbReference>
<dbReference type="InterPro" id="IPR036909">
    <property type="entry name" value="Cyt_c-like_dom_sf"/>
</dbReference>
<dbReference type="InterPro" id="IPR023655">
    <property type="entry name" value="Cyt_C6"/>
</dbReference>
<dbReference type="InterPro" id="IPR008168">
    <property type="entry name" value="Cyt_C_IC"/>
</dbReference>
<dbReference type="PANTHER" id="PTHR34688">
    <property type="entry name" value="CYTOCHROME C6, CHLOROPLASTIC"/>
    <property type="match status" value="1"/>
</dbReference>
<dbReference type="PANTHER" id="PTHR34688:SF2">
    <property type="entry name" value="CYTOCHROME C6, CHLOROPLASTIC"/>
    <property type="match status" value="1"/>
</dbReference>
<dbReference type="Pfam" id="PF13442">
    <property type="entry name" value="Cytochrome_CBB3"/>
    <property type="match status" value="1"/>
</dbReference>
<dbReference type="PRINTS" id="PR00605">
    <property type="entry name" value="CYTCHROMECIC"/>
</dbReference>
<dbReference type="SUPFAM" id="SSF46626">
    <property type="entry name" value="Cytochrome c"/>
    <property type="match status" value="1"/>
</dbReference>
<dbReference type="PROSITE" id="PS51007">
    <property type="entry name" value="CYTC"/>
    <property type="match status" value="1"/>
</dbReference>
<name>CYC6_EUGGR</name>
<gene>
    <name type="primary">petJ</name>
</gene>
<proteinExistence type="evidence at protein level"/>
<sequence length="87" mass="9117">GGADVFADNCSTCHVNGGNVISAGKVLSKTAIEEYLDGGYTKEAIEYQVRNGKGPMPAWEGVLSEDEIVAVTDYVYTQAGGAWANVS</sequence>
<keyword id="KW-0150">Chloroplast</keyword>
<keyword id="KW-0903">Direct protein sequencing</keyword>
<keyword id="KW-0249">Electron transport</keyword>
<keyword id="KW-0349">Heme</keyword>
<keyword id="KW-0408">Iron</keyword>
<keyword id="KW-0479">Metal-binding</keyword>
<keyword id="KW-0602">Photosynthesis</keyword>
<keyword id="KW-0934">Plastid</keyword>
<keyword id="KW-0793">Thylakoid</keyword>
<keyword id="KW-0813">Transport</keyword>
<accession>P00119</accession>
<reference key="1">
    <citation type="journal article" date="1974" name="Biochem. J.">
        <title>The purification and amino acid sequence of cytochrome C-552 from Euglena gracilis.</title>
        <authorList>
            <person name="Pettigrew G.W."/>
        </authorList>
    </citation>
    <scope>PROTEIN SEQUENCE</scope>
</reference>
<protein>
    <recommendedName>
        <fullName>Cytochrome c6</fullName>
    </recommendedName>
    <alternativeName>
        <fullName>Cytochrome c-552</fullName>
    </alternativeName>
    <alternativeName>
        <fullName>Cytochrome c-553</fullName>
    </alternativeName>
    <alternativeName>
        <fullName>Cytochrome c553</fullName>
    </alternativeName>
    <alternativeName>
        <fullName>Soluble cytochrome f</fullName>
    </alternativeName>
</protein>
<evidence type="ECO:0000250" key="1"/>
<evidence type="ECO:0000305" key="2"/>
<organism>
    <name type="scientific">Euglena gracilis</name>
    <dbReference type="NCBI Taxonomy" id="3039"/>
    <lineage>
        <taxon>Eukaryota</taxon>
        <taxon>Discoba</taxon>
        <taxon>Euglenozoa</taxon>
        <taxon>Euglenida</taxon>
        <taxon>Spirocuta</taxon>
        <taxon>Euglenophyceae</taxon>
        <taxon>Euglenales</taxon>
        <taxon>Euglenaceae</taxon>
        <taxon>Euglena</taxon>
    </lineage>
</organism>
<feature type="chain" id="PRO_0000208675" description="Cytochrome c6">
    <location>
        <begin position="1"/>
        <end position="87"/>
    </location>
</feature>
<feature type="binding site" description="covalent">
    <location>
        <position position="10"/>
    </location>
    <ligand>
        <name>heme c</name>
        <dbReference type="ChEBI" id="CHEBI:61717"/>
    </ligand>
</feature>
<feature type="binding site" description="covalent">
    <location>
        <position position="13"/>
    </location>
    <ligand>
        <name>heme c</name>
        <dbReference type="ChEBI" id="CHEBI:61717"/>
    </ligand>
</feature>
<feature type="binding site" description="axial binding residue">
    <location>
        <position position="14"/>
    </location>
    <ligand>
        <name>heme c</name>
        <dbReference type="ChEBI" id="CHEBI:61717"/>
    </ligand>
    <ligandPart>
        <name>Fe</name>
        <dbReference type="ChEBI" id="CHEBI:18248"/>
    </ligandPart>
</feature>
<feature type="binding site" description="axial binding residue">
    <location>
        <position position="56"/>
    </location>
    <ligand>
        <name>heme c</name>
        <dbReference type="ChEBI" id="CHEBI:61717"/>
    </ligand>
    <ligandPart>
        <name>Fe</name>
        <dbReference type="ChEBI" id="CHEBI:18248"/>
    </ligandPart>
</feature>
<comment type="function">
    <text>Functions as an electron carrier between membrane-bound cytochrome b6-f and photosystem I in oxygenic photosynthesis.</text>
</comment>
<comment type="subunit">
    <text evidence="1">Monomer.</text>
</comment>
<comment type="subcellular location">
    <subcellularLocation>
        <location>Plastid</location>
        <location>Chloroplast thylakoid lumen</location>
    </subcellularLocation>
</comment>
<comment type="PTM">
    <text>Binds 1 heme c group covalently per subunit.</text>
</comment>
<comment type="similarity">
    <text evidence="2">Belongs to the cytochrome c family. PetJ subfamily.</text>
</comment>